<name>LEPA_METC4</name>
<dbReference type="EC" id="3.6.5.n1" evidence="1"/>
<dbReference type="EMBL" id="CP001298">
    <property type="protein sequence ID" value="ACK82283.1"/>
    <property type="molecule type" value="Genomic_DNA"/>
</dbReference>
<dbReference type="RefSeq" id="WP_012752292.1">
    <property type="nucleotide sequence ID" value="NC_011757.1"/>
</dbReference>
<dbReference type="SMR" id="B7KR78"/>
<dbReference type="KEGG" id="mch:Mchl_1402"/>
<dbReference type="HOGENOM" id="CLU_009995_3_3_5"/>
<dbReference type="Proteomes" id="UP000002385">
    <property type="component" value="Chromosome"/>
</dbReference>
<dbReference type="GO" id="GO:0005886">
    <property type="term" value="C:plasma membrane"/>
    <property type="evidence" value="ECO:0007669"/>
    <property type="project" value="UniProtKB-SubCell"/>
</dbReference>
<dbReference type="GO" id="GO:0005525">
    <property type="term" value="F:GTP binding"/>
    <property type="evidence" value="ECO:0007669"/>
    <property type="project" value="UniProtKB-UniRule"/>
</dbReference>
<dbReference type="GO" id="GO:0003924">
    <property type="term" value="F:GTPase activity"/>
    <property type="evidence" value="ECO:0007669"/>
    <property type="project" value="UniProtKB-UniRule"/>
</dbReference>
<dbReference type="GO" id="GO:0097216">
    <property type="term" value="F:guanosine tetraphosphate binding"/>
    <property type="evidence" value="ECO:0007669"/>
    <property type="project" value="UniProtKB-ARBA"/>
</dbReference>
<dbReference type="GO" id="GO:0043022">
    <property type="term" value="F:ribosome binding"/>
    <property type="evidence" value="ECO:0007669"/>
    <property type="project" value="UniProtKB-UniRule"/>
</dbReference>
<dbReference type="GO" id="GO:0003746">
    <property type="term" value="F:translation elongation factor activity"/>
    <property type="evidence" value="ECO:0007669"/>
    <property type="project" value="UniProtKB-UniRule"/>
</dbReference>
<dbReference type="GO" id="GO:0045727">
    <property type="term" value="P:positive regulation of translation"/>
    <property type="evidence" value="ECO:0007669"/>
    <property type="project" value="UniProtKB-UniRule"/>
</dbReference>
<dbReference type="CDD" id="cd03699">
    <property type="entry name" value="EF4_II"/>
    <property type="match status" value="1"/>
</dbReference>
<dbReference type="CDD" id="cd16260">
    <property type="entry name" value="EF4_III"/>
    <property type="match status" value="1"/>
</dbReference>
<dbReference type="CDD" id="cd01890">
    <property type="entry name" value="LepA"/>
    <property type="match status" value="1"/>
</dbReference>
<dbReference type="CDD" id="cd03709">
    <property type="entry name" value="lepA_C"/>
    <property type="match status" value="1"/>
</dbReference>
<dbReference type="FunFam" id="3.40.50.300:FF:000078">
    <property type="entry name" value="Elongation factor 4"/>
    <property type="match status" value="1"/>
</dbReference>
<dbReference type="FunFam" id="2.40.30.10:FF:000015">
    <property type="entry name" value="Translation factor GUF1, mitochondrial"/>
    <property type="match status" value="1"/>
</dbReference>
<dbReference type="FunFam" id="3.30.70.240:FF:000007">
    <property type="entry name" value="Translation factor GUF1, mitochondrial"/>
    <property type="match status" value="1"/>
</dbReference>
<dbReference type="FunFam" id="3.30.70.2570:FF:000001">
    <property type="entry name" value="Translation factor GUF1, mitochondrial"/>
    <property type="match status" value="1"/>
</dbReference>
<dbReference type="FunFam" id="3.30.70.870:FF:000004">
    <property type="entry name" value="Translation factor GUF1, mitochondrial"/>
    <property type="match status" value="1"/>
</dbReference>
<dbReference type="Gene3D" id="3.30.70.240">
    <property type="match status" value="1"/>
</dbReference>
<dbReference type="Gene3D" id="3.30.70.2570">
    <property type="entry name" value="Elongation factor 4, C-terminal domain"/>
    <property type="match status" value="1"/>
</dbReference>
<dbReference type="Gene3D" id="3.30.70.870">
    <property type="entry name" value="Elongation Factor G (Translational Gtpase), domain 3"/>
    <property type="match status" value="1"/>
</dbReference>
<dbReference type="Gene3D" id="3.40.50.300">
    <property type="entry name" value="P-loop containing nucleotide triphosphate hydrolases"/>
    <property type="match status" value="1"/>
</dbReference>
<dbReference type="Gene3D" id="2.40.30.10">
    <property type="entry name" value="Translation factors"/>
    <property type="match status" value="1"/>
</dbReference>
<dbReference type="HAMAP" id="MF_00071">
    <property type="entry name" value="LepA"/>
    <property type="match status" value="1"/>
</dbReference>
<dbReference type="InterPro" id="IPR006297">
    <property type="entry name" value="EF-4"/>
</dbReference>
<dbReference type="InterPro" id="IPR035647">
    <property type="entry name" value="EFG_III/V"/>
</dbReference>
<dbReference type="InterPro" id="IPR000640">
    <property type="entry name" value="EFG_V-like"/>
</dbReference>
<dbReference type="InterPro" id="IPR004161">
    <property type="entry name" value="EFTu-like_2"/>
</dbReference>
<dbReference type="InterPro" id="IPR031157">
    <property type="entry name" value="G_TR_CS"/>
</dbReference>
<dbReference type="InterPro" id="IPR038363">
    <property type="entry name" value="LepA_C_sf"/>
</dbReference>
<dbReference type="InterPro" id="IPR013842">
    <property type="entry name" value="LepA_CTD"/>
</dbReference>
<dbReference type="InterPro" id="IPR035654">
    <property type="entry name" value="LepA_IV"/>
</dbReference>
<dbReference type="InterPro" id="IPR027417">
    <property type="entry name" value="P-loop_NTPase"/>
</dbReference>
<dbReference type="InterPro" id="IPR005225">
    <property type="entry name" value="Small_GTP-bd"/>
</dbReference>
<dbReference type="InterPro" id="IPR000795">
    <property type="entry name" value="T_Tr_GTP-bd_dom"/>
</dbReference>
<dbReference type="NCBIfam" id="TIGR01393">
    <property type="entry name" value="lepA"/>
    <property type="match status" value="1"/>
</dbReference>
<dbReference type="NCBIfam" id="TIGR00231">
    <property type="entry name" value="small_GTP"/>
    <property type="match status" value="1"/>
</dbReference>
<dbReference type="PANTHER" id="PTHR43512:SF4">
    <property type="entry name" value="TRANSLATION FACTOR GUF1 HOMOLOG, CHLOROPLASTIC"/>
    <property type="match status" value="1"/>
</dbReference>
<dbReference type="PANTHER" id="PTHR43512">
    <property type="entry name" value="TRANSLATION FACTOR GUF1-RELATED"/>
    <property type="match status" value="1"/>
</dbReference>
<dbReference type="Pfam" id="PF00679">
    <property type="entry name" value="EFG_C"/>
    <property type="match status" value="1"/>
</dbReference>
<dbReference type="Pfam" id="PF00009">
    <property type="entry name" value="GTP_EFTU"/>
    <property type="match status" value="1"/>
</dbReference>
<dbReference type="Pfam" id="PF03144">
    <property type="entry name" value="GTP_EFTU_D2"/>
    <property type="match status" value="1"/>
</dbReference>
<dbReference type="Pfam" id="PF06421">
    <property type="entry name" value="LepA_C"/>
    <property type="match status" value="1"/>
</dbReference>
<dbReference type="PRINTS" id="PR00315">
    <property type="entry name" value="ELONGATNFCT"/>
</dbReference>
<dbReference type="SMART" id="SM00838">
    <property type="entry name" value="EFG_C"/>
    <property type="match status" value="1"/>
</dbReference>
<dbReference type="SUPFAM" id="SSF54980">
    <property type="entry name" value="EF-G C-terminal domain-like"/>
    <property type="match status" value="2"/>
</dbReference>
<dbReference type="SUPFAM" id="SSF52540">
    <property type="entry name" value="P-loop containing nucleoside triphosphate hydrolases"/>
    <property type="match status" value="1"/>
</dbReference>
<dbReference type="PROSITE" id="PS00301">
    <property type="entry name" value="G_TR_1"/>
    <property type="match status" value="1"/>
</dbReference>
<dbReference type="PROSITE" id="PS51722">
    <property type="entry name" value="G_TR_2"/>
    <property type="match status" value="1"/>
</dbReference>
<evidence type="ECO:0000255" key="1">
    <source>
        <dbReference type="HAMAP-Rule" id="MF_00071"/>
    </source>
</evidence>
<protein>
    <recommendedName>
        <fullName evidence="1">Elongation factor 4</fullName>
        <shortName evidence="1">EF-4</shortName>
        <ecNumber evidence="1">3.6.5.n1</ecNumber>
    </recommendedName>
    <alternativeName>
        <fullName evidence="1">Ribosomal back-translocase LepA</fullName>
    </alternativeName>
</protein>
<organism>
    <name type="scientific">Methylorubrum extorquens (strain CM4 / NCIMB 13688)</name>
    <name type="common">Methylobacterium extorquens</name>
    <dbReference type="NCBI Taxonomy" id="440085"/>
    <lineage>
        <taxon>Bacteria</taxon>
        <taxon>Pseudomonadati</taxon>
        <taxon>Pseudomonadota</taxon>
        <taxon>Alphaproteobacteria</taxon>
        <taxon>Hyphomicrobiales</taxon>
        <taxon>Methylobacteriaceae</taxon>
        <taxon>Methylorubrum</taxon>
    </lineage>
</organism>
<proteinExistence type="inferred from homology"/>
<reference key="1">
    <citation type="submission" date="2008-12" db="EMBL/GenBank/DDBJ databases">
        <title>Complete sequence of chromosome of Methylobacterium chloromethanicum CM4.</title>
        <authorList>
            <consortium name="US DOE Joint Genome Institute"/>
            <person name="Lucas S."/>
            <person name="Copeland A."/>
            <person name="Lapidus A."/>
            <person name="Glavina del Rio T."/>
            <person name="Dalin E."/>
            <person name="Tice H."/>
            <person name="Bruce D."/>
            <person name="Goodwin L."/>
            <person name="Pitluck S."/>
            <person name="Chertkov O."/>
            <person name="Brettin T."/>
            <person name="Detter J.C."/>
            <person name="Han C."/>
            <person name="Larimer F."/>
            <person name="Land M."/>
            <person name="Hauser L."/>
            <person name="Kyrpides N."/>
            <person name="Mikhailova N."/>
            <person name="Marx C."/>
            <person name="Richardson P."/>
        </authorList>
    </citation>
    <scope>NUCLEOTIDE SEQUENCE [LARGE SCALE GENOMIC DNA]</scope>
    <source>
        <strain>CM4 / NCIMB 13688</strain>
    </source>
</reference>
<feature type="chain" id="PRO_1000190817" description="Elongation factor 4">
    <location>
        <begin position="1"/>
        <end position="601"/>
    </location>
</feature>
<feature type="domain" description="tr-type G">
    <location>
        <begin position="7"/>
        <end position="189"/>
    </location>
</feature>
<feature type="binding site" evidence="1">
    <location>
        <begin position="19"/>
        <end position="24"/>
    </location>
    <ligand>
        <name>GTP</name>
        <dbReference type="ChEBI" id="CHEBI:37565"/>
    </ligand>
</feature>
<feature type="binding site" evidence="1">
    <location>
        <begin position="136"/>
        <end position="139"/>
    </location>
    <ligand>
        <name>GTP</name>
        <dbReference type="ChEBI" id="CHEBI:37565"/>
    </ligand>
</feature>
<sequence>MTTRTIDNIRNFSIVAHIDHGKSTLADRLIQTTGTVALRDMSEQMLDSMDIEKERGITIKAQTVRLEYRAEDGKDYILNLMDTPGHVDFAYEVSRSLAACEGSLLVVDASQGVEAQTLANVYQALDANHEIVPVLNKVDLPAAEPDRVKEQIEEVIGLDASEAVPISAKTGLNIEAVLEAIVKRLPAPKGDREAPLKALLVDSWYDVYLGVVVLVRIIDGVLKKGMTIRMMGADAAYGVDRIGVFRPKMADIGELGPGEVGFFTGSIKEVADTRVGDTITEDKRQTTQMLAGFKEVQAVVFCGLFPVDAADFESLRGAMGKLRLNDASFSYEMETSAALGFGFRCGFLGLLHLEIIQERLEREFNLDLISTAPSVVYRLLMRDGELKELHNPADMPDPMKIETVEEPWIRATILTPDEYLGGVLKLCQDRRGIQIDLNYVGKRAMVVYDLPLNEVVFDFYDRLKSISKGYASFDYHVSDYREGDLVKMSILVNAEPVDALSMLVHRTRAESRGRAMCEKLKDLIPRHLFQIPVQAAIGGKIIARETIRALSKDVTAKCYGGDISRKRKLLDKQKEGKKRMRQFGRVEIPQEAFIAALKMDD</sequence>
<keyword id="KW-0997">Cell inner membrane</keyword>
<keyword id="KW-1003">Cell membrane</keyword>
<keyword id="KW-0342">GTP-binding</keyword>
<keyword id="KW-0378">Hydrolase</keyword>
<keyword id="KW-0472">Membrane</keyword>
<keyword id="KW-0547">Nucleotide-binding</keyword>
<keyword id="KW-0648">Protein biosynthesis</keyword>
<accession>B7KR78</accession>
<gene>
    <name evidence="1" type="primary">lepA</name>
    <name type="ordered locus">Mchl_1402</name>
</gene>
<comment type="function">
    <text evidence="1">Required for accurate and efficient protein synthesis under certain stress conditions. May act as a fidelity factor of the translation reaction, by catalyzing a one-codon backward translocation of tRNAs on improperly translocated ribosomes. Back-translocation proceeds from a post-translocation (POST) complex to a pre-translocation (PRE) complex, thus giving elongation factor G a second chance to translocate the tRNAs correctly. Binds to ribosomes in a GTP-dependent manner.</text>
</comment>
<comment type="catalytic activity">
    <reaction evidence="1">
        <text>GTP + H2O = GDP + phosphate + H(+)</text>
        <dbReference type="Rhea" id="RHEA:19669"/>
        <dbReference type="ChEBI" id="CHEBI:15377"/>
        <dbReference type="ChEBI" id="CHEBI:15378"/>
        <dbReference type="ChEBI" id="CHEBI:37565"/>
        <dbReference type="ChEBI" id="CHEBI:43474"/>
        <dbReference type="ChEBI" id="CHEBI:58189"/>
        <dbReference type="EC" id="3.6.5.n1"/>
    </reaction>
</comment>
<comment type="subcellular location">
    <subcellularLocation>
        <location evidence="1">Cell inner membrane</location>
        <topology evidence="1">Peripheral membrane protein</topology>
        <orientation evidence="1">Cytoplasmic side</orientation>
    </subcellularLocation>
</comment>
<comment type="similarity">
    <text evidence="1">Belongs to the TRAFAC class translation factor GTPase superfamily. Classic translation factor GTPase family. LepA subfamily.</text>
</comment>